<name>RS15_HAMD5</name>
<dbReference type="EMBL" id="CP001277">
    <property type="protein sequence ID" value="ACQ67090.1"/>
    <property type="molecule type" value="Genomic_DNA"/>
</dbReference>
<dbReference type="RefSeq" id="WP_012738051.1">
    <property type="nucleotide sequence ID" value="NC_012751.1"/>
</dbReference>
<dbReference type="SMR" id="C4K3E7"/>
<dbReference type="STRING" id="572265.HDEF_0328"/>
<dbReference type="GeneID" id="66260243"/>
<dbReference type="KEGG" id="hde:HDEF_0328"/>
<dbReference type="eggNOG" id="COG0184">
    <property type="taxonomic scope" value="Bacteria"/>
</dbReference>
<dbReference type="HOGENOM" id="CLU_148518_0_0_6"/>
<dbReference type="Proteomes" id="UP000002334">
    <property type="component" value="Chromosome"/>
</dbReference>
<dbReference type="GO" id="GO:0022627">
    <property type="term" value="C:cytosolic small ribosomal subunit"/>
    <property type="evidence" value="ECO:0007669"/>
    <property type="project" value="TreeGrafter"/>
</dbReference>
<dbReference type="GO" id="GO:0019843">
    <property type="term" value="F:rRNA binding"/>
    <property type="evidence" value="ECO:0007669"/>
    <property type="project" value="UniProtKB-UniRule"/>
</dbReference>
<dbReference type="GO" id="GO:0003735">
    <property type="term" value="F:structural constituent of ribosome"/>
    <property type="evidence" value="ECO:0007669"/>
    <property type="project" value="InterPro"/>
</dbReference>
<dbReference type="GO" id="GO:0006412">
    <property type="term" value="P:translation"/>
    <property type="evidence" value="ECO:0007669"/>
    <property type="project" value="UniProtKB-UniRule"/>
</dbReference>
<dbReference type="CDD" id="cd00353">
    <property type="entry name" value="Ribosomal_S15p_S13e"/>
    <property type="match status" value="1"/>
</dbReference>
<dbReference type="FunFam" id="1.10.287.10:FF:000002">
    <property type="entry name" value="30S ribosomal protein S15"/>
    <property type="match status" value="1"/>
</dbReference>
<dbReference type="Gene3D" id="6.10.250.3130">
    <property type="match status" value="1"/>
</dbReference>
<dbReference type="Gene3D" id="1.10.287.10">
    <property type="entry name" value="S15/NS1, RNA-binding"/>
    <property type="match status" value="1"/>
</dbReference>
<dbReference type="HAMAP" id="MF_01343_B">
    <property type="entry name" value="Ribosomal_uS15_B"/>
    <property type="match status" value="1"/>
</dbReference>
<dbReference type="InterPro" id="IPR000589">
    <property type="entry name" value="Ribosomal_uS15"/>
</dbReference>
<dbReference type="InterPro" id="IPR005290">
    <property type="entry name" value="Ribosomal_uS15_bac-type"/>
</dbReference>
<dbReference type="InterPro" id="IPR009068">
    <property type="entry name" value="uS15_NS1_RNA-bd_sf"/>
</dbReference>
<dbReference type="NCBIfam" id="TIGR00952">
    <property type="entry name" value="S15_bact"/>
    <property type="match status" value="1"/>
</dbReference>
<dbReference type="PANTHER" id="PTHR23321">
    <property type="entry name" value="RIBOSOMAL PROTEIN S15, BACTERIAL AND ORGANELLAR"/>
    <property type="match status" value="1"/>
</dbReference>
<dbReference type="PANTHER" id="PTHR23321:SF26">
    <property type="entry name" value="SMALL RIBOSOMAL SUBUNIT PROTEIN US15M"/>
    <property type="match status" value="1"/>
</dbReference>
<dbReference type="Pfam" id="PF00312">
    <property type="entry name" value="Ribosomal_S15"/>
    <property type="match status" value="1"/>
</dbReference>
<dbReference type="SMART" id="SM01387">
    <property type="entry name" value="Ribosomal_S15"/>
    <property type="match status" value="1"/>
</dbReference>
<dbReference type="SUPFAM" id="SSF47060">
    <property type="entry name" value="S15/NS1 RNA-binding domain"/>
    <property type="match status" value="1"/>
</dbReference>
<dbReference type="PROSITE" id="PS00362">
    <property type="entry name" value="RIBOSOMAL_S15"/>
    <property type="match status" value="1"/>
</dbReference>
<protein>
    <recommendedName>
        <fullName evidence="1">Small ribosomal subunit protein uS15</fullName>
    </recommendedName>
    <alternativeName>
        <fullName evidence="2">30S ribosomal protein S15</fullName>
    </alternativeName>
</protein>
<reference key="1">
    <citation type="journal article" date="2009" name="Proc. Natl. Acad. Sci. U.S.A.">
        <title>Hamiltonella defensa, genome evolution of protective bacterial endosymbiont from pathogenic ancestors.</title>
        <authorList>
            <person name="Degnan P.H."/>
            <person name="Yu Y."/>
            <person name="Sisneros N."/>
            <person name="Wing R.A."/>
            <person name="Moran N.A."/>
        </authorList>
    </citation>
    <scope>NUCLEOTIDE SEQUENCE [LARGE SCALE GENOMIC DNA]</scope>
    <source>
        <strain>5AT</strain>
    </source>
</reference>
<keyword id="KW-0687">Ribonucleoprotein</keyword>
<keyword id="KW-0689">Ribosomal protein</keyword>
<keyword id="KW-0694">RNA-binding</keyword>
<keyword id="KW-0699">rRNA-binding</keyword>
<organism>
    <name type="scientific">Hamiltonella defensa subsp. Acyrthosiphon pisum (strain 5AT)</name>
    <dbReference type="NCBI Taxonomy" id="572265"/>
    <lineage>
        <taxon>Bacteria</taxon>
        <taxon>Pseudomonadati</taxon>
        <taxon>Pseudomonadota</taxon>
        <taxon>Gammaproteobacteria</taxon>
        <taxon>Enterobacterales</taxon>
        <taxon>Enterobacteriaceae</taxon>
        <taxon>aphid secondary symbionts</taxon>
        <taxon>Candidatus Hamiltonella</taxon>
    </lineage>
</organism>
<accession>C4K3E7</accession>
<gene>
    <name evidence="1" type="primary">rpsO</name>
    <name type="ordered locus">HDEF_0328</name>
</gene>
<evidence type="ECO:0000255" key="1">
    <source>
        <dbReference type="HAMAP-Rule" id="MF_01343"/>
    </source>
</evidence>
<evidence type="ECO:0000305" key="2"/>
<proteinExistence type="inferred from homology"/>
<sequence>MSLNAEQKAKVVLEHGSSAHDTGSTEVQVALLTLRINDLQKHFLEHKKDHHSRRGLLRMVSQRRKLLDYLKKRNISKYTDLIQSLGLRK</sequence>
<feature type="chain" id="PRO_1000214762" description="Small ribosomal subunit protein uS15">
    <location>
        <begin position="1"/>
        <end position="89"/>
    </location>
</feature>
<comment type="function">
    <text evidence="1">One of the primary rRNA binding proteins, it binds directly to 16S rRNA where it helps nucleate assembly of the platform of the 30S subunit by binding and bridging several RNA helices of the 16S rRNA.</text>
</comment>
<comment type="function">
    <text evidence="1">Forms an intersubunit bridge (bridge B4) with the 23S rRNA of the 50S subunit in the ribosome.</text>
</comment>
<comment type="subunit">
    <text evidence="1">Part of the 30S ribosomal subunit. Forms a bridge to the 50S subunit in the 70S ribosome, contacting the 23S rRNA.</text>
</comment>
<comment type="similarity">
    <text evidence="1">Belongs to the universal ribosomal protein uS15 family.</text>
</comment>